<evidence type="ECO:0000255" key="1">
    <source>
        <dbReference type="HAMAP-Rule" id="MF_01274"/>
    </source>
</evidence>
<organism>
    <name type="scientific">Alkaliphilus metalliredigens (strain QYMF)</name>
    <dbReference type="NCBI Taxonomy" id="293826"/>
    <lineage>
        <taxon>Bacteria</taxon>
        <taxon>Bacillati</taxon>
        <taxon>Bacillota</taxon>
        <taxon>Clostridia</taxon>
        <taxon>Peptostreptococcales</taxon>
        <taxon>Natronincolaceae</taxon>
        <taxon>Alkaliphilus</taxon>
    </lineage>
</organism>
<name>COAX_ALKMQ</name>
<comment type="function">
    <text evidence="1">Catalyzes the phosphorylation of pantothenate (Pan), the first step in CoA biosynthesis.</text>
</comment>
<comment type="catalytic activity">
    <reaction evidence="1">
        <text>(R)-pantothenate + ATP = (R)-4'-phosphopantothenate + ADP + H(+)</text>
        <dbReference type="Rhea" id="RHEA:16373"/>
        <dbReference type="ChEBI" id="CHEBI:10986"/>
        <dbReference type="ChEBI" id="CHEBI:15378"/>
        <dbReference type="ChEBI" id="CHEBI:29032"/>
        <dbReference type="ChEBI" id="CHEBI:30616"/>
        <dbReference type="ChEBI" id="CHEBI:456216"/>
        <dbReference type="EC" id="2.7.1.33"/>
    </reaction>
</comment>
<comment type="cofactor">
    <cofactor evidence="1">
        <name>NH4(+)</name>
        <dbReference type="ChEBI" id="CHEBI:28938"/>
    </cofactor>
    <cofactor evidence="1">
        <name>K(+)</name>
        <dbReference type="ChEBI" id="CHEBI:29103"/>
    </cofactor>
    <text evidence="1">A monovalent cation. Ammonium or potassium.</text>
</comment>
<comment type="pathway">
    <text evidence="1">Cofactor biosynthesis; coenzyme A biosynthesis; CoA from (R)-pantothenate: step 1/5.</text>
</comment>
<comment type="subunit">
    <text evidence="1">Homodimer.</text>
</comment>
<comment type="subcellular location">
    <subcellularLocation>
        <location evidence="1">Cytoplasm</location>
    </subcellularLocation>
</comment>
<comment type="similarity">
    <text evidence="1">Belongs to the type III pantothenate kinase family.</text>
</comment>
<proteinExistence type="inferred from homology"/>
<feature type="chain" id="PRO_1000067385" description="Type III pantothenate kinase">
    <location>
        <begin position="1"/>
        <end position="268"/>
    </location>
</feature>
<feature type="active site" description="Proton acceptor" evidence="1">
    <location>
        <position position="109"/>
    </location>
</feature>
<feature type="binding site" evidence="1">
    <location>
        <begin position="6"/>
        <end position="13"/>
    </location>
    <ligand>
        <name>ATP</name>
        <dbReference type="ChEBI" id="CHEBI:30616"/>
    </ligand>
</feature>
<feature type="binding site" evidence="1">
    <location>
        <position position="100"/>
    </location>
    <ligand>
        <name>substrate</name>
    </ligand>
</feature>
<feature type="binding site" evidence="1">
    <location>
        <begin position="107"/>
        <end position="110"/>
    </location>
    <ligand>
        <name>substrate</name>
    </ligand>
</feature>
<feature type="binding site" evidence="1">
    <location>
        <position position="129"/>
    </location>
    <ligand>
        <name>K(+)</name>
        <dbReference type="ChEBI" id="CHEBI:29103"/>
    </ligand>
</feature>
<feature type="binding site" evidence="1">
    <location>
        <position position="132"/>
    </location>
    <ligand>
        <name>ATP</name>
        <dbReference type="ChEBI" id="CHEBI:30616"/>
    </ligand>
</feature>
<feature type="binding site" evidence="1">
    <location>
        <position position="184"/>
    </location>
    <ligand>
        <name>substrate</name>
    </ligand>
</feature>
<protein>
    <recommendedName>
        <fullName evidence="1">Type III pantothenate kinase</fullName>
        <ecNumber evidence="1">2.7.1.33</ecNumber>
    </recommendedName>
    <alternativeName>
        <fullName evidence="1">PanK-III</fullName>
    </alternativeName>
    <alternativeName>
        <fullName evidence="1">Pantothenic acid kinase</fullName>
    </alternativeName>
</protein>
<keyword id="KW-0067">ATP-binding</keyword>
<keyword id="KW-0173">Coenzyme A biosynthesis</keyword>
<keyword id="KW-0963">Cytoplasm</keyword>
<keyword id="KW-0418">Kinase</keyword>
<keyword id="KW-0479">Metal-binding</keyword>
<keyword id="KW-0547">Nucleotide-binding</keyword>
<keyword id="KW-0630">Potassium</keyword>
<keyword id="KW-1185">Reference proteome</keyword>
<keyword id="KW-0808">Transferase</keyword>
<reference key="1">
    <citation type="journal article" date="2016" name="Genome Announc.">
        <title>Complete genome sequence of Alkaliphilus metalliredigens strain QYMF, an alkaliphilic and metal-reducing bacterium isolated from borax-contaminated leachate ponds.</title>
        <authorList>
            <person name="Hwang C."/>
            <person name="Copeland A."/>
            <person name="Lucas S."/>
            <person name="Lapidus A."/>
            <person name="Barry K."/>
            <person name="Detter J.C."/>
            <person name="Glavina Del Rio T."/>
            <person name="Hammon N."/>
            <person name="Israni S."/>
            <person name="Dalin E."/>
            <person name="Tice H."/>
            <person name="Pitluck S."/>
            <person name="Chertkov O."/>
            <person name="Brettin T."/>
            <person name="Bruce D."/>
            <person name="Han C."/>
            <person name="Schmutz J."/>
            <person name="Larimer F."/>
            <person name="Land M.L."/>
            <person name="Hauser L."/>
            <person name="Kyrpides N."/>
            <person name="Mikhailova N."/>
            <person name="Ye Q."/>
            <person name="Zhou J."/>
            <person name="Richardson P."/>
            <person name="Fields M.W."/>
        </authorList>
    </citation>
    <scope>NUCLEOTIDE SEQUENCE [LARGE SCALE GENOMIC DNA]</scope>
    <source>
        <strain>QYMF</strain>
    </source>
</reference>
<gene>
    <name evidence="1" type="primary">coaX</name>
    <name type="ordered locus">Amet_4528</name>
</gene>
<sequence length="268" mass="29370">MILVVDVGNTNIVLGLYEKQELVDFWRISTDEDKSSDEYSVLINQLFQYSGLNIKTVEDVIISSVVPNIMYSLEHAIRKLCNVEPLVVGPGVKTGINIKYDNPKQVGADRIVNAVAAFEKYGGPLIVVDFGTATTFCAISGHGEYLGGTISPGIKIASDALFQRAAKLPRVELVKPGKVICKSTVSSMQAGIVYGYVGLVEYIVNKMKKEFNVRSKIKVVATGGLSTLIDSETQCIDVVDKFLTLEGLSLIYERNRQERQAILKESQA</sequence>
<dbReference type="EC" id="2.7.1.33" evidence="1"/>
<dbReference type="EMBL" id="CP000724">
    <property type="protein sequence ID" value="ABR50600.1"/>
    <property type="molecule type" value="Genomic_DNA"/>
</dbReference>
<dbReference type="RefSeq" id="WP_012065491.1">
    <property type="nucleotide sequence ID" value="NC_009633.1"/>
</dbReference>
<dbReference type="SMR" id="A6TWN2"/>
<dbReference type="STRING" id="293826.Amet_4528"/>
<dbReference type="KEGG" id="amt:Amet_4528"/>
<dbReference type="eggNOG" id="COG1521">
    <property type="taxonomic scope" value="Bacteria"/>
</dbReference>
<dbReference type="HOGENOM" id="CLU_066627_1_0_9"/>
<dbReference type="OrthoDB" id="9804707at2"/>
<dbReference type="UniPathway" id="UPA00241">
    <property type="reaction ID" value="UER00352"/>
</dbReference>
<dbReference type="Proteomes" id="UP000001572">
    <property type="component" value="Chromosome"/>
</dbReference>
<dbReference type="GO" id="GO:0005737">
    <property type="term" value="C:cytoplasm"/>
    <property type="evidence" value="ECO:0007669"/>
    <property type="project" value="UniProtKB-SubCell"/>
</dbReference>
<dbReference type="GO" id="GO:0005524">
    <property type="term" value="F:ATP binding"/>
    <property type="evidence" value="ECO:0007669"/>
    <property type="project" value="UniProtKB-UniRule"/>
</dbReference>
<dbReference type="GO" id="GO:0046872">
    <property type="term" value="F:metal ion binding"/>
    <property type="evidence" value="ECO:0007669"/>
    <property type="project" value="UniProtKB-KW"/>
</dbReference>
<dbReference type="GO" id="GO:0004594">
    <property type="term" value="F:pantothenate kinase activity"/>
    <property type="evidence" value="ECO:0007669"/>
    <property type="project" value="UniProtKB-UniRule"/>
</dbReference>
<dbReference type="GO" id="GO:0015937">
    <property type="term" value="P:coenzyme A biosynthetic process"/>
    <property type="evidence" value="ECO:0007669"/>
    <property type="project" value="UniProtKB-UniRule"/>
</dbReference>
<dbReference type="CDD" id="cd24015">
    <property type="entry name" value="ASKHA_NBD_PanK-III"/>
    <property type="match status" value="1"/>
</dbReference>
<dbReference type="Gene3D" id="3.30.420.40">
    <property type="match status" value="2"/>
</dbReference>
<dbReference type="HAMAP" id="MF_01274">
    <property type="entry name" value="Pantothen_kinase_3"/>
    <property type="match status" value="1"/>
</dbReference>
<dbReference type="InterPro" id="IPR043129">
    <property type="entry name" value="ATPase_NBD"/>
</dbReference>
<dbReference type="InterPro" id="IPR004619">
    <property type="entry name" value="Type_III_PanK"/>
</dbReference>
<dbReference type="NCBIfam" id="TIGR00671">
    <property type="entry name" value="baf"/>
    <property type="match status" value="1"/>
</dbReference>
<dbReference type="NCBIfam" id="NF009847">
    <property type="entry name" value="PRK13318.1-5"/>
    <property type="match status" value="1"/>
</dbReference>
<dbReference type="NCBIfam" id="NF009848">
    <property type="entry name" value="PRK13318.1-6"/>
    <property type="match status" value="1"/>
</dbReference>
<dbReference type="NCBIfam" id="NF009855">
    <property type="entry name" value="PRK13321.1"/>
    <property type="match status" value="1"/>
</dbReference>
<dbReference type="PANTHER" id="PTHR34265">
    <property type="entry name" value="TYPE III PANTOTHENATE KINASE"/>
    <property type="match status" value="1"/>
</dbReference>
<dbReference type="PANTHER" id="PTHR34265:SF1">
    <property type="entry name" value="TYPE III PANTOTHENATE KINASE"/>
    <property type="match status" value="1"/>
</dbReference>
<dbReference type="Pfam" id="PF03309">
    <property type="entry name" value="Pan_kinase"/>
    <property type="match status" value="1"/>
</dbReference>
<dbReference type="SUPFAM" id="SSF53067">
    <property type="entry name" value="Actin-like ATPase domain"/>
    <property type="match status" value="2"/>
</dbReference>
<accession>A6TWN2</accession>